<sequence length="194" mass="21082">MTIKLIVGLANPGAEYAATRHNAGAWFVDLLAERLRAPLREEAKFFGYTSRVTLGGEDVRLLVPTTFMNLSGKAVAAMASFFRINPDEILVAHDELDLPPGVAKFKLGGGHGGHNGLKDIISKLGNNPNFHRLRIGIGHPGDKNKVVGFVLGKPPVSEQKLIDEAIDEAARCTEMWFTDGLTKATNRLHAFKAQ</sequence>
<accession>B5YXM2</accession>
<name>PTH_ECO5E</name>
<organism>
    <name type="scientific">Escherichia coli O157:H7 (strain EC4115 / EHEC)</name>
    <dbReference type="NCBI Taxonomy" id="444450"/>
    <lineage>
        <taxon>Bacteria</taxon>
        <taxon>Pseudomonadati</taxon>
        <taxon>Pseudomonadota</taxon>
        <taxon>Gammaproteobacteria</taxon>
        <taxon>Enterobacterales</taxon>
        <taxon>Enterobacteriaceae</taxon>
        <taxon>Escherichia</taxon>
    </lineage>
</organism>
<evidence type="ECO:0000255" key="1">
    <source>
        <dbReference type="HAMAP-Rule" id="MF_00083"/>
    </source>
</evidence>
<dbReference type="EC" id="3.1.1.29" evidence="1"/>
<dbReference type="EMBL" id="CP001164">
    <property type="protein sequence ID" value="ACI37406.1"/>
    <property type="molecule type" value="Genomic_DNA"/>
</dbReference>
<dbReference type="RefSeq" id="WP_000152933.1">
    <property type="nucleotide sequence ID" value="NC_011353.1"/>
</dbReference>
<dbReference type="SMR" id="B5YXM2"/>
<dbReference type="GeneID" id="93775269"/>
<dbReference type="KEGG" id="ecf:ECH74115_1685"/>
<dbReference type="HOGENOM" id="CLU_062456_3_1_6"/>
<dbReference type="GO" id="GO:0005737">
    <property type="term" value="C:cytoplasm"/>
    <property type="evidence" value="ECO:0007669"/>
    <property type="project" value="UniProtKB-SubCell"/>
</dbReference>
<dbReference type="GO" id="GO:0004045">
    <property type="term" value="F:peptidyl-tRNA hydrolase activity"/>
    <property type="evidence" value="ECO:0007669"/>
    <property type="project" value="UniProtKB-UniRule"/>
</dbReference>
<dbReference type="GO" id="GO:0000049">
    <property type="term" value="F:tRNA binding"/>
    <property type="evidence" value="ECO:0007669"/>
    <property type="project" value="UniProtKB-UniRule"/>
</dbReference>
<dbReference type="GO" id="GO:0006515">
    <property type="term" value="P:protein quality control for misfolded or incompletely synthesized proteins"/>
    <property type="evidence" value="ECO:0007669"/>
    <property type="project" value="UniProtKB-UniRule"/>
</dbReference>
<dbReference type="GO" id="GO:0072344">
    <property type="term" value="P:rescue of stalled ribosome"/>
    <property type="evidence" value="ECO:0007669"/>
    <property type="project" value="UniProtKB-UniRule"/>
</dbReference>
<dbReference type="CDD" id="cd00462">
    <property type="entry name" value="PTH"/>
    <property type="match status" value="1"/>
</dbReference>
<dbReference type="FunFam" id="3.40.50.1470:FF:000001">
    <property type="entry name" value="Peptidyl-tRNA hydrolase"/>
    <property type="match status" value="1"/>
</dbReference>
<dbReference type="Gene3D" id="3.40.50.1470">
    <property type="entry name" value="Peptidyl-tRNA hydrolase"/>
    <property type="match status" value="1"/>
</dbReference>
<dbReference type="HAMAP" id="MF_00083">
    <property type="entry name" value="Pept_tRNA_hydro_bact"/>
    <property type="match status" value="1"/>
</dbReference>
<dbReference type="InterPro" id="IPR001328">
    <property type="entry name" value="Pept_tRNA_hydro"/>
</dbReference>
<dbReference type="InterPro" id="IPR018171">
    <property type="entry name" value="Pept_tRNA_hydro_CS"/>
</dbReference>
<dbReference type="InterPro" id="IPR036416">
    <property type="entry name" value="Pept_tRNA_hydro_sf"/>
</dbReference>
<dbReference type="NCBIfam" id="TIGR00447">
    <property type="entry name" value="pth"/>
    <property type="match status" value="1"/>
</dbReference>
<dbReference type="PANTHER" id="PTHR17224">
    <property type="entry name" value="PEPTIDYL-TRNA HYDROLASE"/>
    <property type="match status" value="1"/>
</dbReference>
<dbReference type="PANTHER" id="PTHR17224:SF1">
    <property type="entry name" value="PEPTIDYL-TRNA HYDROLASE"/>
    <property type="match status" value="1"/>
</dbReference>
<dbReference type="Pfam" id="PF01195">
    <property type="entry name" value="Pept_tRNA_hydro"/>
    <property type="match status" value="1"/>
</dbReference>
<dbReference type="SUPFAM" id="SSF53178">
    <property type="entry name" value="Peptidyl-tRNA hydrolase-like"/>
    <property type="match status" value="1"/>
</dbReference>
<dbReference type="PROSITE" id="PS01195">
    <property type="entry name" value="PEPT_TRNA_HYDROL_1"/>
    <property type="match status" value="1"/>
</dbReference>
<dbReference type="PROSITE" id="PS01196">
    <property type="entry name" value="PEPT_TRNA_HYDROL_2"/>
    <property type="match status" value="1"/>
</dbReference>
<proteinExistence type="inferred from homology"/>
<keyword id="KW-0963">Cytoplasm</keyword>
<keyword id="KW-0378">Hydrolase</keyword>
<keyword id="KW-0694">RNA-binding</keyword>
<keyword id="KW-0820">tRNA-binding</keyword>
<gene>
    <name evidence="1" type="primary">pth</name>
    <name type="ordered locus">ECH74115_1685</name>
</gene>
<feature type="chain" id="PRO_1000092937" description="Peptidyl-tRNA hydrolase">
    <location>
        <begin position="1"/>
        <end position="194"/>
    </location>
</feature>
<feature type="active site" description="Proton acceptor" evidence="1">
    <location>
        <position position="21"/>
    </location>
</feature>
<feature type="binding site" evidence="1">
    <location>
        <position position="16"/>
    </location>
    <ligand>
        <name>tRNA</name>
        <dbReference type="ChEBI" id="CHEBI:17843"/>
    </ligand>
</feature>
<feature type="binding site" evidence="1">
    <location>
        <position position="67"/>
    </location>
    <ligand>
        <name>tRNA</name>
        <dbReference type="ChEBI" id="CHEBI:17843"/>
    </ligand>
</feature>
<feature type="binding site" evidence="1">
    <location>
        <position position="69"/>
    </location>
    <ligand>
        <name>tRNA</name>
        <dbReference type="ChEBI" id="CHEBI:17843"/>
    </ligand>
</feature>
<feature type="binding site" evidence="1">
    <location>
        <position position="115"/>
    </location>
    <ligand>
        <name>tRNA</name>
        <dbReference type="ChEBI" id="CHEBI:17843"/>
    </ligand>
</feature>
<feature type="site" description="Discriminates between blocked and unblocked aminoacyl-tRNA" evidence="1">
    <location>
        <position position="11"/>
    </location>
</feature>
<feature type="site" description="Stabilizes the basic form of H active site to accept a proton" evidence="1">
    <location>
        <position position="94"/>
    </location>
</feature>
<comment type="function">
    <text evidence="1">Hydrolyzes ribosome-free peptidyl-tRNAs (with 1 or more amino acids incorporated), which drop off the ribosome during protein synthesis, or as a result of ribosome stalling.</text>
</comment>
<comment type="function">
    <text evidence="1">Catalyzes the release of premature peptidyl moieties from peptidyl-tRNA molecules trapped in stalled 50S ribosomal subunits, and thus maintains levels of free tRNAs and 50S ribosomes.</text>
</comment>
<comment type="catalytic activity">
    <reaction evidence="1">
        <text>an N-acyl-L-alpha-aminoacyl-tRNA + H2O = an N-acyl-L-amino acid + a tRNA + H(+)</text>
        <dbReference type="Rhea" id="RHEA:54448"/>
        <dbReference type="Rhea" id="RHEA-COMP:10123"/>
        <dbReference type="Rhea" id="RHEA-COMP:13883"/>
        <dbReference type="ChEBI" id="CHEBI:15377"/>
        <dbReference type="ChEBI" id="CHEBI:15378"/>
        <dbReference type="ChEBI" id="CHEBI:59874"/>
        <dbReference type="ChEBI" id="CHEBI:78442"/>
        <dbReference type="ChEBI" id="CHEBI:138191"/>
        <dbReference type="EC" id="3.1.1.29"/>
    </reaction>
</comment>
<comment type="subunit">
    <text evidence="1">Monomer.</text>
</comment>
<comment type="subcellular location">
    <subcellularLocation>
        <location evidence="1">Cytoplasm</location>
    </subcellularLocation>
</comment>
<comment type="similarity">
    <text evidence="1">Belongs to the PTH family.</text>
</comment>
<reference key="1">
    <citation type="journal article" date="2011" name="Proc. Natl. Acad. Sci. U.S.A.">
        <title>Genomic anatomy of Escherichia coli O157:H7 outbreaks.</title>
        <authorList>
            <person name="Eppinger M."/>
            <person name="Mammel M.K."/>
            <person name="Leclerc J.E."/>
            <person name="Ravel J."/>
            <person name="Cebula T.A."/>
        </authorList>
    </citation>
    <scope>NUCLEOTIDE SEQUENCE [LARGE SCALE GENOMIC DNA]</scope>
    <source>
        <strain>EC4115 / EHEC</strain>
    </source>
</reference>
<protein>
    <recommendedName>
        <fullName evidence="1">Peptidyl-tRNA hydrolase</fullName>
        <shortName evidence="1">Pth</shortName>
        <ecNumber evidence="1">3.1.1.29</ecNumber>
    </recommendedName>
</protein>